<proteinExistence type="inferred from homology"/>
<reference key="1">
    <citation type="journal article" date="2014" name="Stand. Genomic Sci.">
        <title>Complete genome sequence of Burkholderia phymatum STM815(T), a broad host range and efficient nitrogen-fixing symbiont of Mimosa species.</title>
        <authorList>
            <person name="Moulin L."/>
            <person name="Klonowska A."/>
            <person name="Caroline B."/>
            <person name="Booth K."/>
            <person name="Vriezen J.A."/>
            <person name="Melkonian R."/>
            <person name="James E.K."/>
            <person name="Young J.P."/>
            <person name="Bena G."/>
            <person name="Hauser L."/>
            <person name="Land M."/>
            <person name="Kyrpides N."/>
            <person name="Bruce D."/>
            <person name="Chain P."/>
            <person name="Copeland A."/>
            <person name="Pitluck S."/>
            <person name="Woyke T."/>
            <person name="Lizotte-Waniewski M."/>
            <person name="Bristow J."/>
            <person name="Riley M."/>
        </authorList>
    </citation>
    <scope>NUCLEOTIDE SEQUENCE [LARGE SCALE GENOMIC DNA]</scope>
    <source>
        <strain>DSM 17167 / CIP 108236 / LMG 21445 / STM815</strain>
    </source>
</reference>
<dbReference type="EMBL" id="CP001044">
    <property type="protein sequence ID" value="ACC72464.1"/>
    <property type="molecule type" value="Genomic_DNA"/>
</dbReference>
<dbReference type="RefSeq" id="WP_012402637.1">
    <property type="nucleotide sequence ID" value="NC_010623.1"/>
</dbReference>
<dbReference type="SMR" id="B2JS87"/>
<dbReference type="STRING" id="391038.Bphy_3308"/>
<dbReference type="KEGG" id="bph:Bphy_3308"/>
<dbReference type="eggNOG" id="COG1309">
    <property type="taxonomic scope" value="Bacteria"/>
</dbReference>
<dbReference type="HOGENOM" id="CLU_069356_15_4_4"/>
<dbReference type="OrthoDB" id="7618612at2"/>
<dbReference type="UniPathway" id="UPA00529"/>
<dbReference type="Proteomes" id="UP000001192">
    <property type="component" value="Chromosome 2"/>
</dbReference>
<dbReference type="GO" id="GO:0003700">
    <property type="term" value="F:DNA-binding transcription factor activity"/>
    <property type="evidence" value="ECO:0007669"/>
    <property type="project" value="UniProtKB-UniRule"/>
</dbReference>
<dbReference type="GO" id="GO:0000976">
    <property type="term" value="F:transcription cis-regulatory region binding"/>
    <property type="evidence" value="ECO:0007669"/>
    <property type="project" value="TreeGrafter"/>
</dbReference>
<dbReference type="GO" id="GO:0019285">
    <property type="term" value="P:glycine betaine biosynthetic process from choline"/>
    <property type="evidence" value="ECO:0007669"/>
    <property type="project" value="UniProtKB-UniRule"/>
</dbReference>
<dbReference type="GO" id="GO:0045892">
    <property type="term" value="P:negative regulation of DNA-templated transcription"/>
    <property type="evidence" value="ECO:0007669"/>
    <property type="project" value="UniProtKB-UniRule"/>
</dbReference>
<dbReference type="Gene3D" id="1.10.357.10">
    <property type="entry name" value="Tetracycline Repressor, domain 2"/>
    <property type="match status" value="1"/>
</dbReference>
<dbReference type="HAMAP" id="MF_00768">
    <property type="entry name" value="HTH_type_BetI"/>
    <property type="match status" value="1"/>
</dbReference>
<dbReference type="InterPro" id="IPR039538">
    <property type="entry name" value="BetI_C"/>
</dbReference>
<dbReference type="InterPro" id="IPR023772">
    <property type="entry name" value="DNA-bd_HTH_TetR-type_CS"/>
</dbReference>
<dbReference type="InterPro" id="IPR009057">
    <property type="entry name" value="Homeodomain-like_sf"/>
</dbReference>
<dbReference type="InterPro" id="IPR050109">
    <property type="entry name" value="HTH-type_TetR-like_transc_reg"/>
</dbReference>
<dbReference type="InterPro" id="IPR001647">
    <property type="entry name" value="HTH_TetR"/>
</dbReference>
<dbReference type="InterPro" id="IPR036271">
    <property type="entry name" value="Tet_transcr_reg_TetR-rel_C_sf"/>
</dbReference>
<dbReference type="InterPro" id="IPR017757">
    <property type="entry name" value="Tscrpt_rep_BetI"/>
</dbReference>
<dbReference type="NCBIfam" id="TIGR03384">
    <property type="entry name" value="betaine_BetI"/>
    <property type="match status" value="1"/>
</dbReference>
<dbReference type="NCBIfam" id="NF001978">
    <property type="entry name" value="PRK00767.1"/>
    <property type="match status" value="1"/>
</dbReference>
<dbReference type="PANTHER" id="PTHR30055:SF234">
    <property type="entry name" value="HTH-TYPE TRANSCRIPTIONAL REGULATOR BETI"/>
    <property type="match status" value="1"/>
</dbReference>
<dbReference type="PANTHER" id="PTHR30055">
    <property type="entry name" value="HTH-TYPE TRANSCRIPTIONAL REGULATOR RUTR"/>
    <property type="match status" value="1"/>
</dbReference>
<dbReference type="Pfam" id="PF13977">
    <property type="entry name" value="TetR_C_6"/>
    <property type="match status" value="1"/>
</dbReference>
<dbReference type="Pfam" id="PF00440">
    <property type="entry name" value="TetR_N"/>
    <property type="match status" value="1"/>
</dbReference>
<dbReference type="SUPFAM" id="SSF46689">
    <property type="entry name" value="Homeodomain-like"/>
    <property type="match status" value="1"/>
</dbReference>
<dbReference type="SUPFAM" id="SSF48498">
    <property type="entry name" value="Tetracyclin repressor-like, C-terminal domain"/>
    <property type="match status" value="1"/>
</dbReference>
<dbReference type="PROSITE" id="PS01081">
    <property type="entry name" value="HTH_TETR_1"/>
    <property type="match status" value="1"/>
</dbReference>
<dbReference type="PROSITE" id="PS50977">
    <property type="entry name" value="HTH_TETR_2"/>
    <property type="match status" value="1"/>
</dbReference>
<sequence>MPKVGMREVRRAQLIDATLLTIDQSGLSGTTLASVAQRANISTGIVSHYFGDKDGLLEATMRHILRDLWAATTRRRIAAKAQPRARLRAIVAANFDVSQVSGPVMKTWLAFWSESMHEPALRRLQHVNTRRLYSNLCAEFAKELPRACARRAASGLAAMIDGLWLRGALSGDPFDTKAALRLANDYIDLLLAQSAA</sequence>
<feature type="chain" id="PRO_1000133656" description="HTH-type transcriptional regulator BetI">
    <location>
        <begin position="1"/>
        <end position="196"/>
    </location>
</feature>
<feature type="domain" description="HTH tetR-type" evidence="2">
    <location>
        <begin position="8"/>
        <end position="68"/>
    </location>
</feature>
<feature type="DNA-binding region" description="H-T-H motif" evidence="2">
    <location>
        <begin position="31"/>
        <end position="50"/>
    </location>
</feature>
<protein>
    <recommendedName>
        <fullName evidence="2">HTH-type transcriptional regulator BetI</fullName>
    </recommendedName>
</protein>
<keyword id="KW-0238">DNA-binding</keyword>
<keyword id="KW-1185">Reference proteome</keyword>
<keyword id="KW-0678">Repressor</keyword>
<keyword id="KW-0804">Transcription</keyword>
<keyword id="KW-0805">Transcription regulation</keyword>
<name>BETI_PARP8</name>
<accession>B2JS87</accession>
<gene>
    <name evidence="2" type="primary">betI</name>
    <name type="ordered locus">Bphy_3308</name>
</gene>
<organism>
    <name type="scientific">Paraburkholderia phymatum (strain DSM 17167 / CIP 108236 / LMG 21445 / STM815)</name>
    <name type="common">Burkholderia phymatum</name>
    <dbReference type="NCBI Taxonomy" id="391038"/>
    <lineage>
        <taxon>Bacteria</taxon>
        <taxon>Pseudomonadati</taxon>
        <taxon>Pseudomonadota</taxon>
        <taxon>Betaproteobacteria</taxon>
        <taxon>Burkholderiales</taxon>
        <taxon>Burkholderiaceae</taxon>
        <taxon>Paraburkholderia</taxon>
    </lineage>
</organism>
<evidence type="ECO:0000250" key="1"/>
<evidence type="ECO:0000255" key="2">
    <source>
        <dbReference type="HAMAP-Rule" id="MF_00768"/>
    </source>
</evidence>
<comment type="function">
    <text evidence="1">Repressor involved in the biosynthesis of the osmoprotectant glycine betaine. It represses transcription of the choline transporter BetT and the genes of BetAB involved in the synthesis of glycine betaine (By similarity).</text>
</comment>
<comment type="pathway">
    <text>Amine and polyamine biosynthesis; betaine biosynthesis via choline pathway [regulation].</text>
</comment>